<comment type="function">
    <text evidence="1">NDH-1 shuttles electrons from NADH, via FMN and iron-sulfur (Fe-S) centers, to quinones in the respiratory chain. The immediate electron acceptor for the enzyme in this species is believed to be ubiquinone. Couples the redox reaction to proton translocation (for every two electrons transferred, four hydrogen ions are translocated across the cytoplasmic membrane), and thus conserves the redox energy in a proton gradient.</text>
</comment>
<comment type="catalytic activity">
    <reaction evidence="1">
        <text>a quinone + NADH + 5 H(+)(in) = a quinol + NAD(+) + 4 H(+)(out)</text>
        <dbReference type="Rhea" id="RHEA:57888"/>
        <dbReference type="ChEBI" id="CHEBI:15378"/>
        <dbReference type="ChEBI" id="CHEBI:24646"/>
        <dbReference type="ChEBI" id="CHEBI:57540"/>
        <dbReference type="ChEBI" id="CHEBI:57945"/>
        <dbReference type="ChEBI" id="CHEBI:132124"/>
    </reaction>
</comment>
<comment type="cofactor">
    <cofactor evidence="1">
        <name>[4Fe-4S] cluster</name>
        <dbReference type="ChEBI" id="CHEBI:49883"/>
    </cofactor>
    <text evidence="1">Binds 2 [4Fe-4S] clusters per subunit.</text>
</comment>
<comment type="subunit">
    <text evidence="1">NDH-1 is composed of 14 different subunits. Subunits NuoA, H, J, K, L, M, N constitute the membrane sector of the complex.</text>
</comment>
<comment type="subcellular location">
    <subcellularLocation>
        <location evidence="1">Cell inner membrane</location>
        <topology evidence="1">Peripheral membrane protein</topology>
    </subcellularLocation>
</comment>
<comment type="similarity">
    <text evidence="1">Belongs to the complex I 23 kDa subunit family.</text>
</comment>
<sequence>MTQIDYTRAAKYFLLADFFKGFKLGMKYFFAPKVTINYPHEKGPLSPRFRGEHALRRYPNGEERCIACKLCEAICPAQAITIDAEPREDGSRRTTRYDIDMTKCIYCGFCQEACPVDAIVEGPNFEFATETREELYYDKEKLLANGERWESAIAHNLELDAPYR</sequence>
<gene>
    <name evidence="1" type="primary">nuoI</name>
    <name type="ordered locus">Jann_1187</name>
</gene>
<name>NUOI_JANSC</name>
<feature type="chain" id="PRO_0000250910" description="NADH-quinone oxidoreductase subunit I">
    <location>
        <begin position="1"/>
        <end position="164"/>
    </location>
</feature>
<feature type="domain" description="4Fe-4S ferredoxin-type 1" evidence="1">
    <location>
        <begin position="55"/>
        <end position="85"/>
    </location>
</feature>
<feature type="domain" description="4Fe-4S ferredoxin-type 2" evidence="1">
    <location>
        <begin position="95"/>
        <end position="124"/>
    </location>
</feature>
<feature type="binding site" evidence="1">
    <location>
        <position position="65"/>
    </location>
    <ligand>
        <name>[4Fe-4S] cluster</name>
        <dbReference type="ChEBI" id="CHEBI:49883"/>
        <label>1</label>
    </ligand>
</feature>
<feature type="binding site" evidence="1">
    <location>
        <position position="68"/>
    </location>
    <ligand>
        <name>[4Fe-4S] cluster</name>
        <dbReference type="ChEBI" id="CHEBI:49883"/>
        <label>1</label>
    </ligand>
</feature>
<feature type="binding site" evidence="1">
    <location>
        <position position="71"/>
    </location>
    <ligand>
        <name>[4Fe-4S] cluster</name>
        <dbReference type="ChEBI" id="CHEBI:49883"/>
        <label>1</label>
    </ligand>
</feature>
<feature type="binding site" evidence="1">
    <location>
        <position position="75"/>
    </location>
    <ligand>
        <name>[4Fe-4S] cluster</name>
        <dbReference type="ChEBI" id="CHEBI:49883"/>
        <label>2</label>
    </ligand>
</feature>
<feature type="binding site" evidence="1">
    <location>
        <position position="104"/>
    </location>
    <ligand>
        <name>[4Fe-4S] cluster</name>
        <dbReference type="ChEBI" id="CHEBI:49883"/>
        <label>2</label>
    </ligand>
</feature>
<feature type="binding site" evidence="1">
    <location>
        <position position="107"/>
    </location>
    <ligand>
        <name>[4Fe-4S] cluster</name>
        <dbReference type="ChEBI" id="CHEBI:49883"/>
        <label>2</label>
    </ligand>
</feature>
<feature type="binding site" evidence="1">
    <location>
        <position position="110"/>
    </location>
    <ligand>
        <name>[4Fe-4S] cluster</name>
        <dbReference type="ChEBI" id="CHEBI:49883"/>
        <label>2</label>
    </ligand>
</feature>
<feature type="binding site" evidence="1">
    <location>
        <position position="114"/>
    </location>
    <ligand>
        <name>[4Fe-4S] cluster</name>
        <dbReference type="ChEBI" id="CHEBI:49883"/>
        <label>1</label>
    </ligand>
</feature>
<proteinExistence type="inferred from homology"/>
<dbReference type="EC" id="7.1.1.-" evidence="1"/>
<dbReference type="EMBL" id="CP000264">
    <property type="protein sequence ID" value="ABD54104.1"/>
    <property type="molecule type" value="Genomic_DNA"/>
</dbReference>
<dbReference type="RefSeq" id="WP_011454311.1">
    <property type="nucleotide sequence ID" value="NC_007802.1"/>
</dbReference>
<dbReference type="SMR" id="Q28T58"/>
<dbReference type="STRING" id="290400.Jann_1187"/>
<dbReference type="KEGG" id="jan:Jann_1187"/>
<dbReference type="eggNOG" id="COG1143">
    <property type="taxonomic scope" value="Bacteria"/>
</dbReference>
<dbReference type="HOGENOM" id="CLU_067218_5_1_5"/>
<dbReference type="OrthoDB" id="9808559at2"/>
<dbReference type="Proteomes" id="UP000008326">
    <property type="component" value="Chromosome"/>
</dbReference>
<dbReference type="GO" id="GO:0005886">
    <property type="term" value="C:plasma membrane"/>
    <property type="evidence" value="ECO:0007669"/>
    <property type="project" value="UniProtKB-SubCell"/>
</dbReference>
<dbReference type="GO" id="GO:0051539">
    <property type="term" value="F:4 iron, 4 sulfur cluster binding"/>
    <property type="evidence" value="ECO:0007669"/>
    <property type="project" value="UniProtKB-KW"/>
</dbReference>
<dbReference type="GO" id="GO:0005506">
    <property type="term" value="F:iron ion binding"/>
    <property type="evidence" value="ECO:0007669"/>
    <property type="project" value="UniProtKB-UniRule"/>
</dbReference>
<dbReference type="GO" id="GO:0050136">
    <property type="term" value="F:NADH:ubiquinone reductase (non-electrogenic) activity"/>
    <property type="evidence" value="ECO:0007669"/>
    <property type="project" value="UniProtKB-UniRule"/>
</dbReference>
<dbReference type="GO" id="GO:0048038">
    <property type="term" value="F:quinone binding"/>
    <property type="evidence" value="ECO:0007669"/>
    <property type="project" value="UniProtKB-KW"/>
</dbReference>
<dbReference type="GO" id="GO:0009060">
    <property type="term" value="P:aerobic respiration"/>
    <property type="evidence" value="ECO:0007669"/>
    <property type="project" value="TreeGrafter"/>
</dbReference>
<dbReference type="FunFam" id="3.30.70.3270:FF:000001">
    <property type="entry name" value="NADH-quinone oxidoreductase subunit I 1"/>
    <property type="match status" value="1"/>
</dbReference>
<dbReference type="Gene3D" id="3.30.70.3270">
    <property type="match status" value="1"/>
</dbReference>
<dbReference type="HAMAP" id="MF_01351">
    <property type="entry name" value="NDH1_NuoI"/>
    <property type="match status" value="1"/>
</dbReference>
<dbReference type="InterPro" id="IPR017896">
    <property type="entry name" value="4Fe4S_Fe-S-bd"/>
</dbReference>
<dbReference type="InterPro" id="IPR017900">
    <property type="entry name" value="4Fe4S_Fe_S_CS"/>
</dbReference>
<dbReference type="InterPro" id="IPR010226">
    <property type="entry name" value="NADH_quinone_OxRdtase_chainI"/>
</dbReference>
<dbReference type="NCBIfam" id="TIGR01971">
    <property type="entry name" value="NuoI"/>
    <property type="match status" value="1"/>
</dbReference>
<dbReference type="NCBIfam" id="NF004538">
    <property type="entry name" value="PRK05888.1-4"/>
    <property type="match status" value="1"/>
</dbReference>
<dbReference type="NCBIfam" id="NF004539">
    <property type="entry name" value="PRK05888.1-5"/>
    <property type="match status" value="1"/>
</dbReference>
<dbReference type="PANTHER" id="PTHR10849:SF20">
    <property type="entry name" value="NADH DEHYDROGENASE [UBIQUINONE] IRON-SULFUR PROTEIN 8, MITOCHONDRIAL"/>
    <property type="match status" value="1"/>
</dbReference>
<dbReference type="PANTHER" id="PTHR10849">
    <property type="entry name" value="NADH DEHYDROGENASE UBIQUINONE IRON-SULFUR PROTEIN 8, MITOCHONDRIAL"/>
    <property type="match status" value="1"/>
</dbReference>
<dbReference type="Pfam" id="PF12838">
    <property type="entry name" value="Fer4_7"/>
    <property type="match status" value="1"/>
</dbReference>
<dbReference type="SUPFAM" id="SSF54862">
    <property type="entry name" value="4Fe-4S ferredoxins"/>
    <property type="match status" value="1"/>
</dbReference>
<dbReference type="PROSITE" id="PS00198">
    <property type="entry name" value="4FE4S_FER_1"/>
    <property type="match status" value="2"/>
</dbReference>
<dbReference type="PROSITE" id="PS51379">
    <property type="entry name" value="4FE4S_FER_2"/>
    <property type="match status" value="2"/>
</dbReference>
<reference key="1">
    <citation type="submission" date="2006-02" db="EMBL/GenBank/DDBJ databases">
        <title>Complete sequence of chromosome of Jannaschia sp. CCS1.</title>
        <authorList>
            <consortium name="US DOE Joint Genome Institute"/>
            <person name="Copeland A."/>
            <person name="Lucas S."/>
            <person name="Lapidus A."/>
            <person name="Barry K."/>
            <person name="Detter J.C."/>
            <person name="Glavina del Rio T."/>
            <person name="Hammon N."/>
            <person name="Israni S."/>
            <person name="Pitluck S."/>
            <person name="Brettin T."/>
            <person name="Bruce D."/>
            <person name="Han C."/>
            <person name="Tapia R."/>
            <person name="Gilna P."/>
            <person name="Chertkov O."/>
            <person name="Saunders E."/>
            <person name="Schmutz J."/>
            <person name="Larimer F."/>
            <person name="Land M."/>
            <person name="Kyrpides N."/>
            <person name="Lykidis A."/>
            <person name="Moran M.A."/>
            <person name="Belas R."/>
            <person name="Ye W."/>
            <person name="Buchan A."/>
            <person name="Gonzalez J.M."/>
            <person name="Schell M.A."/>
            <person name="Richardson P."/>
        </authorList>
    </citation>
    <scope>NUCLEOTIDE SEQUENCE [LARGE SCALE GENOMIC DNA]</scope>
    <source>
        <strain>CCS1</strain>
    </source>
</reference>
<evidence type="ECO:0000255" key="1">
    <source>
        <dbReference type="HAMAP-Rule" id="MF_01351"/>
    </source>
</evidence>
<protein>
    <recommendedName>
        <fullName evidence="1">NADH-quinone oxidoreductase subunit I</fullName>
        <ecNumber evidence="1">7.1.1.-</ecNumber>
    </recommendedName>
    <alternativeName>
        <fullName evidence="1">NADH dehydrogenase I subunit I</fullName>
    </alternativeName>
    <alternativeName>
        <fullName evidence="1">NDH-1 subunit I</fullName>
    </alternativeName>
</protein>
<keyword id="KW-0004">4Fe-4S</keyword>
<keyword id="KW-0997">Cell inner membrane</keyword>
<keyword id="KW-1003">Cell membrane</keyword>
<keyword id="KW-0408">Iron</keyword>
<keyword id="KW-0411">Iron-sulfur</keyword>
<keyword id="KW-0472">Membrane</keyword>
<keyword id="KW-0479">Metal-binding</keyword>
<keyword id="KW-0520">NAD</keyword>
<keyword id="KW-0874">Quinone</keyword>
<keyword id="KW-1185">Reference proteome</keyword>
<keyword id="KW-0677">Repeat</keyword>
<keyword id="KW-1278">Translocase</keyword>
<keyword id="KW-0830">Ubiquinone</keyword>
<accession>Q28T58</accession>
<organism>
    <name type="scientific">Jannaschia sp. (strain CCS1)</name>
    <dbReference type="NCBI Taxonomy" id="290400"/>
    <lineage>
        <taxon>Bacteria</taxon>
        <taxon>Pseudomonadati</taxon>
        <taxon>Pseudomonadota</taxon>
        <taxon>Alphaproteobacteria</taxon>
        <taxon>Rhodobacterales</taxon>
        <taxon>Roseobacteraceae</taxon>
        <taxon>Jannaschia</taxon>
    </lineage>
</organism>